<sequence length="143" mass="16252">MKVEIYTDGACKGNPGPGGWGVLLRYNGREKTLHGGEAQTTNNRMELMAAIKGLEALKRPCEVDLYTDSQYLQQGMKEWIKTWKRNGWRNSKKELVKNAELWKSLDNLASIHNIHWHWVKGHSGHLENDLVDALANLGIEELS</sequence>
<feature type="chain" id="PRO_0000332620" description="Ribonuclease H">
    <location>
        <begin position="1"/>
        <end position="143"/>
    </location>
</feature>
<feature type="domain" description="RNase H type-1" evidence="2">
    <location>
        <begin position="1"/>
        <end position="140"/>
    </location>
</feature>
<feature type="binding site" evidence="1">
    <location>
        <position position="8"/>
    </location>
    <ligand>
        <name>Mg(2+)</name>
        <dbReference type="ChEBI" id="CHEBI:18420"/>
        <label>1</label>
    </ligand>
</feature>
<feature type="binding site" evidence="1">
    <location>
        <position position="8"/>
    </location>
    <ligand>
        <name>Mg(2+)</name>
        <dbReference type="ChEBI" id="CHEBI:18420"/>
        <label>2</label>
    </ligand>
</feature>
<feature type="binding site" evidence="1">
    <location>
        <position position="46"/>
    </location>
    <ligand>
        <name>Mg(2+)</name>
        <dbReference type="ChEBI" id="CHEBI:18420"/>
        <label>1</label>
    </ligand>
</feature>
<feature type="binding site" evidence="1">
    <location>
        <position position="68"/>
    </location>
    <ligand>
        <name>Mg(2+)</name>
        <dbReference type="ChEBI" id="CHEBI:18420"/>
        <label>1</label>
    </ligand>
</feature>
<feature type="binding site" evidence="1">
    <location>
        <position position="132"/>
    </location>
    <ligand>
        <name>Mg(2+)</name>
        <dbReference type="ChEBI" id="CHEBI:18420"/>
        <label>2</label>
    </ligand>
</feature>
<evidence type="ECO:0000255" key="1">
    <source>
        <dbReference type="HAMAP-Rule" id="MF_00042"/>
    </source>
</evidence>
<evidence type="ECO:0000255" key="2">
    <source>
        <dbReference type="PROSITE-ProRule" id="PRU00408"/>
    </source>
</evidence>
<comment type="function">
    <text evidence="1">Endonuclease that specifically degrades the RNA of RNA-DNA hybrids.</text>
</comment>
<comment type="catalytic activity">
    <reaction evidence="1">
        <text>Endonucleolytic cleavage to 5'-phosphomonoester.</text>
        <dbReference type="EC" id="3.1.26.4"/>
    </reaction>
</comment>
<comment type="cofactor">
    <cofactor evidence="1">
        <name>Mg(2+)</name>
        <dbReference type="ChEBI" id="CHEBI:18420"/>
    </cofactor>
    <text evidence="1">Binds 1 Mg(2+) ion per subunit. May bind a second metal ion at a regulatory site, or after substrate binding.</text>
</comment>
<comment type="subunit">
    <text evidence="1">Monomer.</text>
</comment>
<comment type="subcellular location">
    <subcellularLocation>
        <location evidence="1">Cytoplasm</location>
    </subcellularLocation>
</comment>
<comment type="similarity">
    <text evidence="1">Belongs to the RNase H family.</text>
</comment>
<organism>
    <name type="scientific">Legionella pneumophila (strain Paris)</name>
    <dbReference type="NCBI Taxonomy" id="297246"/>
    <lineage>
        <taxon>Bacteria</taxon>
        <taxon>Pseudomonadati</taxon>
        <taxon>Pseudomonadota</taxon>
        <taxon>Gammaproteobacteria</taxon>
        <taxon>Legionellales</taxon>
        <taxon>Legionellaceae</taxon>
        <taxon>Legionella</taxon>
    </lineage>
</organism>
<reference key="1">
    <citation type="journal article" date="2004" name="Nat. Genet.">
        <title>Evidence in the Legionella pneumophila genome for exploitation of host cell functions and high genome plasticity.</title>
        <authorList>
            <person name="Cazalet C."/>
            <person name="Rusniok C."/>
            <person name="Brueggemann H."/>
            <person name="Zidane N."/>
            <person name="Magnier A."/>
            <person name="Ma L."/>
            <person name="Tichit M."/>
            <person name="Jarraud S."/>
            <person name="Bouchier C."/>
            <person name="Vandenesch F."/>
            <person name="Kunst F."/>
            <person name="Etienne J."/>
            <person name="Glaser P."/>
            <person name="Buchrieser C."/>
        </authorList>
    </citation>
    <scope>NUCLEOTIDE SEQUENCE [LARGE SCALE GENOMIC DNA]</scope>
    <source>
        <strain>Paris</strain>
    </source>
</reference>
<protein>
    <recommendedName>
        <fullName evidence="1">Ribonuclease H</fullName>
        <shortName evidence="1">RNase H</shortName>
        <ecNumber evidence="1">3.1.26.4</ecNumber>
    </recommendedName>
</protein>
<name>RNH_LEGPA</name>
<keyword id="KW-0963">Cytoplasm</keyword>
<keyword id="KW-0255">Endonuclease</keyword>
<keyword id="KW-0378">Hydrolase</keyword>
<keyword id="KW-0460">Magnesium</keyword>
<keyword id="KW-0479">Metal-binding</keyword>
<keyword id="KW-0540">Nuclease</keyword>
<gene>
    <name evidence="1" type="primary">rnhA</name>
    <name type="ordered locus">lpp1338</name>
</gene>
<accession>Q5X5I2</accession>
<proteinExistence type="inferred from homology"/>
<dbReference type="EC" id="3.1.26.4" evidence="1"/>
<dbReference type="EMBL" id="CR628336">
    <property type="protein sequence ID" value="CAH12489.1"/>
    <property type="molecule type" value="Genomic_DNA"/>
</dbReference>
<dbReference type="RefSeq" id="WP_010947113.1">
    <property type="nucleotide sequence ID" value="NC_006368.1"/>
</dbReference>
<dbReference type="SMR" id="Q5X5I2"/>
<dbReference type="GeneID" id="57035373"/>
<dbReference type="KEGG" id="lpp:lpp1338"/>
<dbReference type="LegioList" id="lpp1338"/>
<dbReference type="HOGENOM" id="CLU_030894_6_0_6"/>
<dbReference type="GO" id="GO:0005737">
    <property type="term" value="C:cytoplasm"/>
    <property type="evidence" value="ECO:0007669"/>
    <property type="project" value="UniProtKB-SubCell"/>
</dbReference>
<dbReference type="GO" id="GO:0000287">
    <property type="term" value="F:magnesium ion binding"/>
    <property type="evidence" value="ECO:0007669"/>
    <property type="project" value="UniProtKB-UniRule"/>
</dbReference>
<dbReference type="GO" id="GO:0003676">
    <property type="term" value="F:nucleic acid binding"/>
    <property type="evidence" value="ECO:0007669"/>
    <property type="project" value="InterPro"/>
</dbReference>
<dbReference type="GO" id="GO:0004523">
    <property type="term" value="F:RNA-DNA hybrid ribonuclease activity"/>
    <property type="evidence" value="ECO:0007669"/>
    <property type="project" value="UniProtKB-UniRule"/>
</dbReference>
<dbReference type="GO" id="GO:0043137">
    <property type="term" value="P:DNA replication, removal of RNA primer"/>
    <property type="evidence" value="ECO:0007669"/>
    <property type="project" value="TreeGrafter"/>
</dbReference>
<dbReference type="CDD" id="cd09278">
    <property type="entry name" value="RNase_HI_prokaryote_like"/>
    <property type="match status" value="1"/>
</dbReference>
<dbReference type="FunFam" id="3.30.420.10:FF:000089">
    <property type="entry name" value="Ribonuclease H"/>
    <property type="match status" value="1"/>
</dbReference>
<dbReference type="Gene3D" id="3.30.420.10">
    <property type="entry name" value="Ribonuclease H-like superfamily/Ribonuclease H"/>
    <property type="match status" value="1"/>
</dbReference>
<dbReference type="HAMAP" id="MF_00042">
    <property type="entry name" value="RNase_H"/>
    <property type="match status" value="1"/>
</dbReference>
<dbReference type="InterPro" id="IPR050092">
    <property type="entry name" value="RNase_H"/>
</dbReference>
<dbReference type="InterPro" id="IPR012337">
    <property type="entry name" value="RNaseH-like_sf"/>
</dbReference>
<dbReference type="InterPro" id="IPR002156">
    <property type="entry name" value="RNaseH_domain"/>
</dbReference>
<dbReference type="InterPro" id="IPR036397">
    <property type="entry name" value="RNaseH_sf"/>
</dbReference>
<dbReference type="InterPro" id="IPR022892">
    <property type="entry name" value="RNaseHI"/>
</dbReference>
<dbReference type="NCBIfam" id="NF001236">
    <property type="entry name" value="PRK00203.1"/>
    <property type="match status" value="1"/>
</dbReference>
<dbReference type="PANTHER" id="PTHR10642">
    <property type="entry name" value="RIBONUCLEASE H1"/>
    <property type="match status" value="1"/>
</dbReference>
<dbReference type="PANTHER" id="PTHR10642:SF26">
    <property type="entry name" value="RIBONUCLEASE H1"/>
    <property type="match status" value="1"/>
</dbReference>
<dbReference type="Pfam" id="PF00075">
    <property type="entry name" value="RNase_H"/>
    <property type="match status" value="1"/>
</dbReference>
<dbReference type="SUPFAM" id="SSF53098">
    <property type="entry name" value="Ribonuclease H-like"/>
    <property type="match status" value="1"/>
</dbReference>
<dbReference type="PROSITE" id="PS50879">
    <property type="entry name" value="RNASE_H_1"/>
    <property type="match status" value="1"/>
</dbReference>